<organism>
    <name type="scientific">Geotalea daltonii (strain DSM 22248 / JCM 15807 / FRC-32)</name>
    <name type="common">Geobacter daltonii</name>
    <dbReference type="NCBI Taxonomy" id="316067"/>
    <lineage>
        <taxon>Bacteria</taxon>
        <taxon>Pseudomonadati</taxon>
        <taxon>Thermodesulfobacteriota</taxon>
        <taxon>Desulfuromonadia</taxon>
        <taxon>Geobacterales</taxon>
        <taxon>Geobacteraceae</taxon>
        <taxon>Geotalea</taxon>
    </lineage>
</organism>
<dbReference type="EC" id="5.3.1.24" evidence="1"/>
<dbReference type="EMBL" id="CP001390">
    <property type="protein sequence ID" value="ACM21779.1"/>
    <property type="molecule type" value="Genomic_DNA"/>
</dbReference>
<dbReference type="RefSeq" id="WP_012648507.1">
    <property type="nucleotide sequence ID" value="NC_011979.1"/>
</dbReference>
<dbReference type="SMR" id="B9M5M0"/>
<dbReference type="STRING" id="316067.Geob_3436"/>
<dbReference type="KEGG" id="geo:Geob_3436"/>
<dbReference type="eggNOG" id="COG0135">
    <property type="taxonomic scope" value="Bacteria"/>
</dbReference>
<dbReference type="HOGENOM" id="CLU_076364_2_0_7"/>
<dbReference type="OrthoDB" id="9796196at2"/>
<dbReference type="UniPathway" id="UPA00035">
    <property type="reaction ID" value="UER00042"/>
</dbReference>
<dbReference type="Proteomes" id="UP000007721">
    <property type="component" value="Chromosome"/>
</dbReference>
<dbReference type="GO" id="GO:0004640">
    <property type="term" value="F:phosphoribosylanthranilate isomerase activity"/>
    <property type="evidence" value="ECO:0007669"/>
    <property type="project" value="UniProtKB-UniRule"/>
</dbReference>
<dbReference type="GO" id="GO:0000162">
    <property type="term" value="P:L-tryptophan biosynthetic process"/>
    <property type="evidence" value="ECO:0007669"/>
    <property type="project" value="UniProtKB-UniRule"/>
</dbReference>
<dbReference type="CDD" id="cd00405">
    <property type="entry name" value="PRAI"/>
    <property type="match status" value="1"/>
</dbReference>
<dbReference type="FunFam" id="3.20.20.70:FF:000075">
    <property type="entry name" value="Tryptophan biosynthesis protein TRP1"/>
    <property type="match status" value="1"/>
</dbReference>
<dbReference type="Gene3D" id="3.20.20.70">
    <property type="entry name" value="Aldolase class I"/>
    <property type="match status" value="1"/>
</dbReference>
<dbReference type="HAMAP" id="MF_00135">
    <property type="entry name" value="PRAI"/>
    <property type="match status" value="1"/>
</dbReference>
<dbReference type="InterPro" id="IPR013785">
    <property type="entry name" value="Aldolase_TIM"/>
</dbReference>
<dbReference type="InterPro" id="IPR001240">
    <property type="entry name" value="PRAI_dom"/>
</dbReference>
<dbReference type="InterPro" id="IPR011060">
    <property type="entry name" value="RibuloseP-bd_barrel"/>
</dbReference>
<dbReference type="InterPro" id="IPR044643">
    <property type="entry name" value="TrpF_fam"/>
</dbReference>
<dbReference type="NCBIfam" id="NF002298">
    <property type="entry name" value="PRK01222.1-4"/>
    <property type="match status" value="1"/>
</dbReference>
<dbReference type="PANTHER" id="PTHR42894">
    <property type="entry name" value="N-(5'-PHOSPHORIBOSYL)ANTHRANILATE ISOMERASE"/>
    <property type="match status" value="1"/>
</dbReference>
<dbReference type="PANTHER" id="PTHR42894:SF1">
    <property type="entry name" value="N-(5'-PHOSPHORIBOSYL)ANTHRANILATE ISOMERASE"/>
    <property type="match status" value="1"/>
</dbReference>
<dbReference type="Pfam" id="PF00697">
    <property type="entry name" value="PRAI"/>
    <property type="match status" value="1"/>
</dbReference>
<dbReference type="SUPFAM" id="SSF51366">
    <property type="entry name" value="Ribulose-phoshate binding barrel"/>
    <property type="match status" value="1"/>
</dbReference>
<comment type="catalytic activity">
    <reaction evidence="1">
        <text>N-(5-phospho-beta-D-ribosyl)anthranilate = 1-(2-carboxyphenylamino)-1-deoxy-D-ribulose 5-phosphate</text>
        <dbReference type="Rhea" id="RHEA:21540"/>
        <dbReference type="ChEBI" id="CHEBI:18277"/>
        <dbReference type="ChEBI" id="CHEBI:58613"/>
        <dbReference type="EC" id="5.3.1.24"/>
    </reaction>
</comment>
<comment type="pathway">
    <text evidence="1">Amino-acid biosynthesis; L-tryptophan biosynthesis; L-tryptophan from chorismate: step 3/5.</text>
</comment>
<comment type="similarity">
    <text evidence="1">Belongs to the TrpF family.</text>
</comment>
<gene>
    <name evidence="1" type="primary">trpF</name>
    <name type="ordered locus">Geob_3436</name>
</gene>
<protein>
    <recommendedName>
        <fullName evidence="1">N-(5'-phosphoribosyl)anthranilate isomerase</fullName>
        <shortName evidence="1">PRAI</shortName>
        <ecNumber evidence="1">5.3.1.24</ecNumber>
    </recommendedName>
</protein>
<keyword id="KW-0028">Amino-acid biosynthesis</keyword>
<keyword id="KW-0057">Aromatic amino acid biosynthesis</keyword>
<keyword id="KW-0413">Isomerase</keyword>
<keyword id="KW-1185">Reference proteome</keyword>
<keyword id="KW-0822">Tryptophan biosynthesis</keyword>
<reference key="1">
    <citation type="submission" date="2009-01" db="EMBL/GenBank/DDBJ databases">
        <title>Complete sequence of Geobacter sp. FRC-32.</title>
        <authorList>
            <consortium name="US DOE Joint Genome Institute"/>
            <person name="Lucas S."/>
            <person name="Copeland A."/>
            <person name="Lapidus A."/>
            <person name="Glavina del Rio T."/>
            <person name="Dalin E."/>
            <person name="Tice H."/>
            <person name="Bruce D."/>
            <person name="Goodwin L."/>
            <person name="Pitluck S."/>
            <person name="Saunders E."/>
            <person name="Brettin T."/>
            <person name="Detter J.C."/>
            <person name="Han C."/>
            <person name="Larimer F."/>
            <person name="Land M."/>
            <person name="Hauser L."/>
            <person name="Kyrpides N."/>
            <person name="Ovchinnikova G."/>
            <person name="Kostka J."/>
            <person name="Richardson P."/>
        </authorList>
    </citation>
    <scope>NUCLEOTIDE SEQUENCE [LARGE SCALE GENOMIC DNA]</scope>
    <source>
        <strain>DSM 22248 / JCM 15807 / FRC-32</strain>
    </source>
</reference>
<feature type="chain" id="PRO_1000197102" description="N-(5'-phosphoribosyl)anthranilate isomerase">
    <location>
        <begin position="1"/>
        <end position="207"/>
    </location>
</feature>
<evidence type="ECO:0000255" key="1">
    <source>
        <dbReference type="HAMAP-Rule" id="MF_00135"/>
    </source>
</evidence>
<name>TRPF_GEODF</name>
<sequence>MTKVKICGITTVADAMMAVEAGADALGFVFYDQSPRNLEPAQAAEIIRVLPPFVQVVGLFVHAPLDFINTVTDRCRLDVVQLHGDEPQEFCAAVNRRVIKAFRIKDITSLDHMDEYNVAGYLLDAWSPKAFGGTGVTFNWDTALIAKKFGPIILAGGLTPENVAEAVHYVSPYGVDVSSGVEAAHRVKDPEKVRQFIQRAKECLGSM</sequence>
<accession>B9M5M0</accession>
<proteinExistence type="inferred from homology"/>